<keyword id="KW-0997">Cell inner membrane</keyword>
<keyword id="KW-1003">Cell membrane</keyword>
<keyword id="KW-0249">Electron transport</keyword>
<keyword id="KW-0349">Heme</keyword>
<keyword id="KW-0408">Iron</keyword>
<keyword id="KW-0472">Membrane</keyword>
<keyword id="KW-0479">Metal-binding</keyword>
<keyword id="KW-1185">Reference proteome</keyword>
<keyword id="KW-0812">Transmembrane</keyword>
<keyword id="KW-1133">Transmembrane helix</keyword>
<keyword id="KW-0813">Transport</keyword>
<protein>
    <recommendedName>
        <fullName>Cytochrome c-type protein NapC</fullName>
    </recommendedName>
</protein>
<gene>
    <name type="primary">napC</name>
    <name type="ordered locus">HI_0348</name>
</gene>
<proteinExistence type="inferred from homology"/>
<evidence type="ECO:0000250" key="1">
    <source>
        <dbReference type="UniProtKB" id="Q72EF4"/>
    </source>
</evidence>
<evidence type="ECO:0000255" key="2"/>
<evidence type="ECO:0000305" key="3"/>
<comment type="function">
    <text>Mediates electron flow from quinones to the NapAB complex.</text>
</comment>
<comment type="subcellular location">
    <subcellularLocation>
        <location>Cell inner membrane</location>
        <topology>Single-pass membrane protein</topology>
    </subcellularLocation>
</comment>
<comment type="PTM">
    <text evidence="3">Binds 4 heme groups per subunit.</text>
</comment>
<comment type="similarity">
    <text evidence="3">Belongs to the NapC/NirT/NrfH family.</text>
</comment>
<sequence>MSEKKPNILKRFWQWFRKPSRMAIGTIIILSAIGGILSWVGFNYGLEKTNTEQFCASCHMQDAYPEYLHSVHYQTRTGVGASCPDCHVPHEFGAKMKRKIIAAKEVYAHYTGKVDTLEKFNAHRLEMAQNEWARMKANDSKECRNCHNVDRMTFNDQRSVAARMHQKMKTEGKTCIDCHKGIAHQLPDMSGVESGFKDEK</sequence>
<accession>P44655</accession>
<name>NAPC_HAEIN</name>
<feature type="chain" id="PRO_0000108435" description="Cytochrome c-type protein NapC">
    <location>
        <begin position="1"/>
        <end position="200"/>
    </location>
</feature>
<feature type="topological domain" description="Cytoplasmic" evidence="2">
    <location>
        <begin position="1"/>
        <end position="21"/>
    </location>
</feature>
<feature type="transmembrane region" description="Helical" evidence="2">
    <location>
        <begin position="22"/>
        <end position="42"/>
    </location>
</feature>
<feature type="topological domain" description="Periplasmic" evidence="2">
    <location>
        <begin position="43"/>
        <end position="200"/>
    </location>
</feature>
<feature type="binding site" description="covalent" evidence="1">
    <location>
        <position position="55"/>
    </location>
    <ligand>
        <name>heme</name>
        <dbReference type="ChEBI" id="CHEBI:30413"/>
        <label>1</label>
    </ligand>
</feature>
<feature type="binding site" description="covalent" evidence="1">
    <location>
        <position position="58"/>
    </location>
    <ligand>
        <name>heme</name>
        <dbReference type="ChEBI" id="CHEBI:30413"/>
        <label>1</label>
    </ligand>
</feature>
<feature type="binding site" description="axial binding residue" evidence="1">
    <location>
        <position position="60"/>
    </location>
    <ligand>
        <name>heme</name>
        <dbReference type="ChEBI" id="CHEBI:30413"/>
        <label>1</label>
    </ligand>
    <ligandPart>
        <name>Fe</name>
        <dbReference type="ChEBI" id="CHEBI:18248"/>
    </ligandPart>
</feature>
<feature type="binding site" description="covalent" evidence="1">
    <location>
        <position position="83"/>
    </location>
    <ligand>
        <name>heme</name>
        <dbReference type="ChEBI" id="CHEBI:30413"/>
        <label>2</label>
    </ligand>
</feature>
<feature type="binding site" description="covalent" evidence="1">
    <location>
        <position position="86"/>
    </location>
    <ligand>
        <name>heme</name>
        <dbReference type="ChEBI" id="CHEBI:30413"/>
        <label>2</label>
    </ligand>
</feature>
<feature type="binding site" description="axial binding residue" evidence="1">
    <location>
        <position position="87"/>
    </location>
    <ligand>
        <name>heme</name>
        <dbReference type="ChEBI" id="CHEBI:30413"/>
        <label>2</label>
    </ligand>
    <ligandPart>
        <name>Fe</name>
        <dbReference type="ChEBI" id="CHEBI:18248"/>
    </ligandPart>
</feature>
<feature type="binding site" evidence="1">
    <location>
        <position position="99"/>
    </location>
    <ligand>
        <name>substrate</name>
    </ligand>
</feature>
<feature type="binding site" description="axial binding residue" evidence="1">
    <location>
        <position position="105"/>
    </location>
    <ligand>
        <name>heme</name>
        <dbReference type="ChEBI" id="CHEBI:30413"/>
        <label>1</label>
    </ligand>
    <ligandPart>
        <name>Fe</name>
        <dbReference type="ChEBI" id="CHEBI:18248"/>
    </ligandPart>
</feature>
<feature type="binding site" description="covalent" evidence="1">
    <location>
        <position position="143"/>
    </location>
    <ligand>
        <name>heme</name>
        <dbReference type="ChEBI" id="CHEBI:30413"/>
        <label>3</label>
    </ligand>
</feature>
<feature type="binding site" description="covalent" evidence="1">
    <location>
        <position position="146"/>
    </location>
    <ligand>
        <name>heme</name>
        <dbReference type="ChEBI" id="CHEBI:30413"/>
        <label>3</label>
    </ligand>
</feature>
<feature type="binding site" description="axial binding residue" evidence="1">
    <location>
        <position position="147"/>
    </location>
    <ligand>
        <name>heme</name>
        <dbReference type="ChEBI" id="CHEBI:30413"/>
        <label>3</label>
    </ligand>
    <ligandPart>
        <name>Fe</name>
        <dbReference type="ChEBI" id="CHEBI:18248"/>
    </ligandPart>
</feature>
<feature type="binding site" description="covalent" evidence="1">
    <location>
        <position position="175"/>
    </location>
    <ligand>
        <name>heme</name>
        <dbReference type="ChEBI" id="CHEBI:30413"/>
        <label>4</label>
    </ligand>
</feature>
<feature type="binding site" description="covalent" evidence="1">
    <location>
        <position position="178"/>
    </location>
    <ligand>
        <name>heme</name>
        <dbReference type="ChEBI" id="CHEBI:30413"/>
        <label>4</label>
    </ligand>
</feature>
<feature type="binding site" description="axial binding residue" evidence="1">
    <location>
        <position position="179"/>
    </location>
    <ligand>
        <name>heme</name>
        <dbReference type="ChEBI" id="CHEBI:30413"/>
        <label>4</label>
    </ligand>
    <ligandPart>
        <name>Fe</name>
        <dbReference type="ChEBI" id="CHEBI:18248"/>
    </ligandPart>
</feature>
<feature type="binding site" description="axial binding residue" evidence="1">
    <location>
        <position position="184"/>
    </location>
    <ligand>
        <name>heme</name>
        <dbReference type="ChEBI" id="CHEBI:30413"/>
        <label>2</label>
    </ligand>
    <ligandPart>
        <name>Fe</name>
        <dbReference type="ChEBI" id="CHEBI:18248"/>
    </ligandPart>
</feature>
<organism>
    <name type="scientific">Haemophilus influenzae (strain ATCC 51907 / DSM 11121 / KW20 / Rd)</name>
    <dbReference type="NCBI Taxonomy" id="71421"/>
    <lineage>
        <taxon>Bacteria</taxon>
        <taxon>Pseudomonadati</taxon>
        <taxon>Pseudomonadota</taxon>
        <taxon>Gammaproteobacteria</taxon>
        <taxon>Pasteurellales</taxon>
        <taxon>Pasteurellaceae</taxon>
        <taxon>Haemophilus</taxon>
    </lineage>
</organism>
<reference key="1">
    <citation type="journal article" date="1995" name="Science">
        <title>Whole-genome random sequencing and assembly of Haemophilus influenzae Rd.</title>
        <authorList>
            <person name="Fleischmann R.D."/>
            <person name="Adams M.D."/>
            <person name="White O."/>
            <person name="Clayton R.A."/>
            <person name="Kirkness E.F."/>
            <person name="Kerlavage A.R."/>
            <person name="Bult C.J."/>
            <person name="Tomb J.-F."/>
            <person name="Dougherty B.A."/>
            <person name="Merrick J.M."/>
            <person name="McKenney K."/>
            <person name="Sutton G.G."/>
            <person name="FitzHugh W."/>
            <person name="Fields C.A."/>
            <person name="Gocayne J.D."/>
            <person name="Scott J.D."/>
            <person name="Shirley R."/>
            <person name="Liu L.-I."/>
            <person name="Glodek A."/>
            <person name="Kelley J.M."/>
            <person name="Weidman J.F."/>
            <person name="Phillips C.A."/>
            <person name="Spriggs T."/>
            <person name="Hedblom E."/>
            <person name="Cotton M.D."/>
            <person name="Utterback T.R."/>
            <person name="Hanna M.C."/>
            <person name="Nguyen D.T."/>
            <person name="Saudek D.M."/>
            <person name="Brandon R.C."/>
            <person name="Fine L.D."/>
            <person name="Fritchman J.L."/>
            <person name="Fuhrmann J.L."/>
            <person name="Geoghagen N.S.M."/>
            <person name="Gnehm C.L."/>
            <person name="McDonald L.A."/>
            <person name="Small K.V."/>
            <person name="Fraser C.M."/>
            <person name="Smith H.O."/>
            <person name="Venter J.C."/>
        </authorList>
    </citation>
    <scope>NUCLEOTIDE SEQUENCE [LARGE SCALE GENOMIC DNA]</scope>
    <source>
        <strain>ATCC 51907 / DSM 11121 / KW20 / Rd</strain>
    </source>
</reference>
<dbReference type="EMBL" id="L42023">
    <property type="protein sequence ID" value="AAC22009.1"/>
    <property type="molecule type" value="Genomic_DNA"/>
</dbReference>
<dbReference type="PIR" id="H64062">
    <property type="entry name" value="H64062"/>
</dbReference>
<dbReference type="RefSeq" id="NP_438512.1">
    <property type="nucleotide sequence ID" value="NC_000907.1"/>
</dbReference>
<dbReference type="STRING" id="71421.HI_0348"/>
<dbReference type="DNASU" id="949803"/>
<dbReference type="EnsemblBacteria" id="AAC22009">
    <property type="protein sequence ID" value="AAC22009"/>
    <property type="gene ID" value="HI_0348"/>
</dbReference>
<dbReference type="KEGG" id="hin:HI_0348"/>
<dbReference type="PATRIC" id="fig|71421.8.peg.367"/>
<dbReference type="eggNOG" id="COG3005">
    <property type="taxonomic scope" value="Bacteria"/>
</dbReference>
<dbReference type="HOGENOM" id="CLU_096753_2_0_6"/>
<dbReference type="OrthoDB" id="9782159at2"/>
<dbReference type="PhylomeDB" id="P44655"/>
<dbReference type="BioCyc" id="HINF71421:G1GJ1-364-MONOMER"/>
<dbReference type="Proteomes" id="UP000000579">
    <property type="component" value="Chromosome"/>
</dbReference>
<dbReference type="GO" id="GO:0005886">
    <property type="term" value="C:plasma membrane"/>
    <property type="evidence" value="ECO:0007669"/>
    <property type="project" value="UniProtKB-SubCell"/>
</dbReference>
<dbReference type="GO" id="GO:0009055">
    <property type="term" value="F:electron transfer activity"/>
    <property type="evidence" value="ECO:0000318"/>
    <property type="project" value="GO_Central"/>
</dbReference>
<dbReference type="GO" id="GO:0020037">
    <property type="term" value="F:heme binding"/>
    <property type="evidence" value="ECO:0007669"/>
    <property type="project" value="InterPro"/>
</dbReference>
<dbReference type="GO" id="GO:0046872">
    <property type="term" value="F:metal ion binding"/>
    <property type="evidence" value="ECO:0007669"/>
    <property type="project" value="UniProtKB-KW"/>
</dbReference>
<dbReference type="GO" id="GO:0009061">
    <property type="term" value="P:anaerobic respiration"/>
    <property type="evidence" value="ECO:0000318"/>
    <property type="project" value="GO_Central"/>
</dbReference>
<dbReference type="GO" id="GO:0019333">
    <property type="term" value="P:denitrification pathway"/>
    <property type="evidence" value="ECO:0007669"/>
    <property type="project" value="InterPro"/>
</dbReference>
<dbReference type="FunFam" id="1.10.3820.10:FF:000001">
    <property type="entry name" value="Cytochrome c-type protein"/>
    <property type="match status" value="1"/>
</dbReference>
<dbReference type="Gene3D" id="1.10.3820.10">
    <property type="entry name" value="Di-heme elbow motif domain"/>
    <property type="match status" value="1"/>
</dbReference>
<dbReference type="InterPro" id="IPR051174">
    <property type="entry name" value="Cytochrome_c-type_ET"/>
</dbReference>
<dbReference type="InterPro" id="IPR036280">
    <property type="entry name" value="Multihaem_cyt_sf"/>
</dbReference>
<dbReference type="InterPro" id="IPR024717">
    <property type="entry name" value="NapC/NirT/NrfH"/>
</dbReference>
<dbReference type="InterPro" id="IPR005126">
    <property type="entry name" value="NapC/NirT_cyt_c_N"/>
</dbReference>
<dbReference type="InterPro" id="IPR038266">
    <property type="entry name" value="NapC/NirT_cytc_sf"/>
</dbReference>
<dbReference type="InterPro" id="IPR011885">
    <property type="entry name" value="NO3Rdtase_cyt_c_NapC/NirT"/>
</dbReference>
<dbReference type="NCBIfam" id="TIGR02161">
    <property type="entry name" value="napC_nirT"/>
    <property type="match status" value="1"/>
</dbReference>
<dbReference type="PANTHER" id="PTHR30333">
    <property type="entry name" value="CYTOCHROME C-TYPE PROTEIN"/>
    <property type="match status" value="1"/>
</dbReference>
<dbReference type="PANTHER" id="PTHR30333:SF1">
    <property type="entry name" value="CYTOCHROME C-TYPE PROTEIN NAPC"/>
    <property type="match status" value="1"/>
</dbReference>
<dbReference type="Pfam" id="PF03264">
    <property type="entry name" value="Cytochrom_NNT"/>
    <property type="match status" value="1"/>
</dbReference>
<dbReference type="PIRSF" id="PIRSF000013">
    <property type="entry name" value="4_hem_cytochrm_NapC"/>
    <property type="match status" value="1"/>
</dbReference>
<dbReference type="SUPFAM" id="SSF48695">
    <property type="entry name" value="Multiheme cytochromes"/>
    <property type="match status" value="1"/>
</dbReference>
<dbReference type="PROSITE" id="PS51008">
    <property type="entry name" value="MULTIHEME_CYTC"/>
    <property type="match status" value="1"/>
</dbReference>